<keyword id="KW-0012">Acyltransferase</keyword>
<keyword id="KW-0963">Cytoplasm</keyword>
<keyword id="KW-0408">Iron</keyword>
<keyword id="KW-0479">Metal-binding</keyword>
<keyword id="KW-0808">Transferase</keyword>
<keyword id="KW-0819">tRNA processing</keyword>
<name>TSAD_MICAN</name>
<dbReference type="EC" id="2.3.1.234" evidence="1"/>
<dbReference type="EMBL" id="AP009552">
    <property type="protein sequence ID" value="BAG02636.1"/>
    <property type="molecule type" value="Genomic_DNA"/>
</dbReference>
<dbReference type="RefSeq" id="WP_002798926.1">
    <property type="nucleotide sequence ID" value="NC_010296.1"/>
</dbReference>
<dbReference type="SMR" id="B0JJJ4"/>
<dbReference type="STRING" id="449447.MAE_28140"/>
<dbReference type="PaxDb" id="449447-MAE_28140"/>
<dbReference type="EnsemblBacteria" id="BAG02636">
    <property type="protein sequence ID" value="BAG02636"/>
    <property type="gene ID" value="MAE_28140"/>
</dbReference>
<dbReference type="GeneID" id="66708365"/>
<dbReference type="KEGG" id="mar:MAE_28140"/>
<dbReference type="eggNOG" id="COG0533">
    <property type="taxonomic scope" value="Bacteria"/>
</dbReference>
<dbReference type="HOGENOM" id="CLU_023208_0_2_3"/>
<dbReference type="BioCyc" id="MAER449447:MAE_RS12275-MONOMER"/>
<dbReference type="Proteomes" id="UP000001510">
    <property type="component" value="Chromosome"/>
</dbReference>
<dbReference type="GO" id="GO:0005737">
    <property type="term" value="C:cytoplasm"/>
    <property type="evidence" value="ECO:0007669"/>
    <property type="project" value="UniProtKB-SubCell"/>
</dbReference>
<dbReference type="GO" id="GO:0005506">
    <property type="term" value="F:iron ion binding"/>
    <property type="evidence" value="ECO:0007669"/>
    <property type="project" value="UniProtKB-UniRule"/>
</dbReference>
<dbReference type="GO" id="GO:0061711">
    <property type="term" value="F:N(6)-L-threonylcarbamoyladenine synthase activity"/>
    <property type="evidence" value="ECO:0007669"/>
    <property type="project" value="UniProtKB-EC"/>
</dbReference>
<dbReference type="GO" id="GO:0002949">
    <property type="term" value="P:tRNA threonylcarbamoyladenosine modification"/>
    <property type="evidence" value="ECO:0007669"/>
    <property type="project" value="UniProtKB-UniRule"/>
</dbReference>
<dbReference type="CDD" id="cd24133">
    <property type="entry name" value="ASKHA_NBD_TsaD_bac"/>
    <property type="match status" value="1"/>
</dbReference>
<dbReference type="FunFam" id="3.30.420.40:FF:000040">
    <property type="entry name" value="tRNA N6-adenosine threonylcarbamoyltransferase"/>
    <property type="match status" value="1"/>
</dbReference>
<dbReference type="Gene3D" id="3.30.420.40">
    <property type="match status" value="2"/>
</dbReference>
<dbReference type="HAMAP" id="MF_01445">
    <property type="entry name" value="TsaD"/>
    <property type="match status" value="1"/>
</dbReference>
<dbReference type="InterPro" id="IPR043129">
    <property type="entry name" value="ATPase_NBD"/>
</dbReference>
<dbReference type="InterPro" id="IPR000905">
    <property type="entry name" value="Gcp-like_dom"/>
</dbReference>
<dbReference type="InterPro" id="IPR017861">
    <property type="entry name" value="KAE1/TsaD"/>
</dbReference>
<dbReference type="InterPro" id="IPR017860">
    <property type="entry name" value="Peptidase_M22_CS"/>
</dbReference>
<dbReference type="InterPro" id="IPR022450">
    <property type="entry name" value="TsaD"/>
</dbReference>
<dbReference type="NCBIfam" id="TIGR00329">
    <property type="entry name" value="gcp_kae1"/>
    <property type="match status" value="1"/>
</dbReference>
<dbReference type="NCBIfam" id="TIGR03723">
    <property type="entry name" value="T6A_TsaD_YgjD"/>
    <property type="match status" value="1"/>
</dbReference>
<dbReference type="PANTHER" id="PTHR11735">
    <property type="entry name" value="TRNA N6-ADENOSINE THREONYLCARBAMOYLTRANSFERASE"/>
    <property type="match status" value="1"/>
</dbReference>
<dbReference type="PANTHER" id="PTHR11735:SF6">
    <property type="entry name" value="TRNA N6-ADENOSINE THREONYLCARBAMOYLTRANSFERASE, MITOCHONDRIAL"/>
    <property type="match status" value="1"/>
</dbReference>
<dbReference type="Pfam" id="PF00814">
    <property type="entry name" value="TsaD"/>
    <property type="match status" value="1"/>
</dbReference>
<dbReference type="PRINTS" id="PR00789">
    <property type="entry name" value="OSIALOPTASE"/>
</dbReference>
<dbReference type="SUPFAM" id="SSF53067">
    <property type="entry name" value="Actin-like ATPase domain"/>
    <property type="match status" value="2"/>
</dbReference>
<dbReference type="PROSITE" id="PS01016">
    <property type="entry name" value="GLYCOPROTEASE"/>
    <property type="match status" value="1"/>
</dbReference>
<sequence length="344" mass="36967">MTIILAIETSCDETAVAIVNNNLVLSSVVSSQIDLHRLYGGVVPEMASRQHLETINFCLEKAWQETGLNWSEIDGIAATVAPGLVGALMVGMTAAKTLAIVHDKPFIGIHHLEGHIYASYLAESDLKPPFLSLLVSGGHTSLIHVQACGKYQQLGTTRDDAAGEAFDKVARLLNLSYPGGPIIDRMAKDGNPQAFPLPEGKISLPTGGFHAYDSSFSGLKTAVLRLVEKFEPDNLPVADIAASFQDTVARSLTRRTINCALDYGLKTIAIGGGVAANSALRNHLETAAKNHHLTVYFPPLKLCTDNAAMIARAAVDHYDLGHFSDLSIGVRSRLPLSEVMQLYK</sequence>
<feature type="chain" id="PRO_1000087480" description="tRNA N6-adenosine threonylcarbamoyltransferase">
    <location>
        <begin position="1"/>
        <end position="344"/>
    </location>
</feature>
<feature type="binding site" evidence="1">
    <location>
        <position position="111"/>
    </location>
    <ligand>
        <name>Fe cation</name>
        <dbReference type="ChEBI" id="CHEBI:24875"/>
    </ligand>
</feature>
<feature type="binding site" evidence="1">
    <location>
        <position position="115"/>
    </location>
    <ligand>
        <name>Fe cation</name>
        <dbReference type="ChEBI" id="CHEBI:24875"/>
    </ligand>
</feature>
<feature type="binding site" evidence="1">
    <location>
        <begin position="134"/>
        <end position="138"/>
    </location>
    <ligand>
        <name>substrate</name>
    </ligand>
</feature>
<feature type="binding site" evidence="1">
    <location>
        <position position="167"/>
    </location>
    <ligand>
        <name>substrate</name>
    </ligand>
</feature>
<feature type="binding site" evidence="1">
    <location>
        <position position="180"/>
    </location>
    <ligand>
        <name>substrate</name>
    </ligand>
</feature>
<feature type="binding site" evidence="1">
    <location>
        <position position="184"/>
    </location>
    <ligand>
        <name>substrate</name>
    </ligand>
</feature>
<feature type="binding site" evidence="1">
    <location>
        <position position="277"/>
    </location>
    <ligand>
        <name>substrate</name>
    </ligand>
</feature>
<feature type="binding site" evidence="1">
    <location>
        <position position="305"/>
    </location>
    <ligand>
        <name>Fe cation</name>
        <dbReference type="ChEBI" id="CHEBI:24875"/>
    </ligand>
</feature>
<evidence type="ECO:0000255" key="1">
    <source>
        <dbReference type="HAMAP-Rule" id="MF_01445"/>
    </source>
</evidence>
<accession>B0JJJ4</accession>
<reference key="1">
    <citation type="journal article" date="2007" name="DNA Res.">
        <title>Complete genomic structure of the bloom-forming toxic cyanobacterium Microcystis aeruginosa NIES-843.</title>
        <authorList>
            <person name="Kaneko T."/>
            <person name="Nakajima N."/>
            <person name="Okamoto S."/>
            <person name="Suzuki I."/>
            <person name="Tanabe Y."/>
            <person name="Tamaoki M."/>
            <person name="Nakamura Y."/>
            <person name="Kasai F."/>
            <person name="Watanabe A."/>
            <person name="Kawashima K."/>
            <person name="Kishida Y."/>
            <person name="Ono A."/>
            <person name="Shimizu Y."/>
            <person name="Takahashi C."/>
            <person name="Minami C."/>
            <person name="Fujishiro T."/>
            <person name="Kohara M."/>
            <person name="Katoh M."/>
            <person name="Nakazaki N."/>
            <person name="Nakayama S."/>
            <person name="Yamada M."/>
            <person name="Tabata S."/>
            <person name="Watanabe M.M."/>
        </authorList>
    </citation>
    <scope>NUCLEOTIDE SEQUENCE [LARGE SCALE GENOMIC DNA]</scope>
    <source>
        <strain>NIES-843 / IAM M-247</strain>
    </source>
</reference>
<proteinExistence type="inferred from homology"/>
<protein>
    <recommendedName>
        <fullName evidence="1">tRNA N6-adenosine threonylcarbamoyltransferase</fullName>
        <ecNumber evidence="1">2.3.1.234</ecNumber>
    </recommendedName>
    <alternativeName>
        <fullName evidence="1">N6-L-threonylcarbamoyladenine synthase</fullName>
        <shortName evidence="1">t(6)A synthase</shortName>
    </alternativeName>
    <alternativeName>
        <fullName evidence="1">t(6)A37 threonylcarbamoyladenosine biosynthesis protein TsaD</fullName>
    </alternativeName>
    <alternativeName>
        <fullName evidence="1">tRNA threonylcarbamoyladenosine biosynthesis protein TsaD</fullName>
    </alternativeName>
</protein>
<gene>
    <name evidence="1" type="primary">tsaD</name>
    <name type="synonym">gcp</name>
    <name type="ordered locus">MAE_28140</name>
</gene>
<organism>
    <name type="scientific">Microcystis aeruginosa (strain NIES-843 / IAM M-2473)</name>
    <dbReference type="NCBI Taxonomy" id="449447"/>
    <lineage>
        <taxon>Bacteria</taxon>
        <taxon>Bacillati</taxon>
        <taxon>Cyanobacteriota</taxon>
        <taxon>Cyanophyceae</taxon>
        <taxon>Oscillatoriophycideae</taxon>
        <taxon>Chroococcales</taxon>
        <taxon>Microcystaceae</taxon>
        <taxon>Microcystis</taxon>
    </lineage>
</organism>
<comment type="function">
    <text evidence="1">Required for the formation of a threonylcarbamoyl group on adenosine at position 37 (t(6)A37) in tRNAs that read codons beginning with adenine. Is involved in the transfer of the threonylcarbamoyl moiety of threonylcarbamoyl-AMP (TC-AMP) to the N6 group of A37, together with TsaE and TsaB. TsaD likely plays a direct catalytic role in this reaction.</text>
</comment>
<comment type="catalytic activity">
    <reaction evidence="1">
        <text>L-threonylcarbamoyladenylate + adenosine(37) in tRNA = N(6)-L-threonylcarbamoyladenosine(37) in tRNA + AMP + H(+)</text>
        <dbReference type="Rhea" id="RHEA:37059"/>
        <dbReference type="Rhea" id="RHEA-COMP:10162"/>
        <dbReference type="Rhea" id="RHEA-COMP:10163"/>
        <dbReference type="ChEBI" id="CHEBI:15378"/>
        <dbReference type="ChEBI" id="CHEBI:73682"/>
        <dbReference type="ChEBI" id="CHEBI:74411"/>
        <dbReference type="ChEBI" id="CHEBI:74418"/>
        <dbReference type="ChEBI" id="CHEBI:456215"/>
        <dbReference type="EC" id="2.3.1.234"/>
    </reaction>
</comment>
<comment type="cofactor">
    <cofactor evidence="1">
        <name>Fe(2+)</name>
        <dbReference type="ChEBI" id="CHEBI:29033"/>
    </cofactor>
    <text evidence="1">Binds 1 Fe(2+) ion per subunit.</text>
</comment>
<comment type="subcellular location">
    <subcellularLocation>
        <location evidence="1">Cytoplasm</location>
    </subcellularLocation>
</comment>
<comment type="similarity">
    <text evidence="1">Belongs to the KAE1 / TsaD family.</text>
</comment>